<accession>Q0SQZ0</accession>
<keyword id="KW-0066">ATP synthesis</keyword>
<keyword id="KW-1003">Cell membrane</keyword>
<keyword id="KW-0138">CF(0)</keyword>
<keyword id="KW-0375">Hydrogen ion transport</keyword>
<keyword id="KW-0406">Ion transport</keyword>
<keyword id="KW-0446">Lipid-binding</keyword>
<keyword id="KW-0472">Membrane</keyword>
<keyword id="KW-0812">Transmembrane</keyword>
<keyword id="KW-1133">Transmembrane helix</keyword>
<keyword id="KW-0813">Transport</keyword>
<comment type="function">
    <text evidence="1">F(1)F(0) ATP synthase produces ATP from ADP in the presence of a proton or sodium gradient. F-type ATPases consist of two structural domains, F(1) containing the extramembraneous catalytic core and F(0) containing the membrane proton channel, linked together by a central stalk and a peripheral stalk. During catalysis, ATP synthesis in the catalytic domain of F(1) is coupled via a rotary mechanism of the central stalk subunits to proton translocation.</text>
</comment>
<comment type="function">
    <text evidence="1">Key component of the F(0) channel; it plays a direct role in translocation across the membrane. A homomeric c-ring of between 10-14 subunits forms the central stalk rotor element with the F(1) delta and epsilon subunits.</text>
</comment>
<comment type="subunit">
    <text evidence="1">F-type ATPases have 2 components, F(1) - the catalytic core - and F(0) - the membrane proton channel. F(1) has five subunits: alpha(3), beta(3), gamma(1), delta(1), epsilon(1). F(0) has three main subunits: a(1), b(2) and c(10-14). The alpha and beta chains form an alternating ring which encloses part of the gamma chain. F(1) is attached to F(0) by a central stalk formed by the gamma and epsilon chains, while a peripheral stalk is formed by the delta and b chains.</text>
</comment>
<comment type="subcellular location">
    <subcellularLocation>
        <location evidence="1">Cell membrane</location>
        <topology evidence="1">Multi-pass membrane protein</topology>
    </subcellularLocation>
</comment>
<comment type="similarity">
    <text evidence="1">Belongs to the ATPase C chain family.</text>
</comment>
<gene>
    <name evidence="1" type="primary">atpE</name>
    <name type="ordered locus">CPR_2167</name>
</gene>
<organism>
    <name type="scientific">Clostridium perfringens (strain SM101 / Type A)</name>
    <dbReference type="NCBI Taxonomy" id="289380"/>
    <lineage>
        <taxon>Bacteria</taxon>
        <taxon>Bacillati</taxon>
        <taxon>Bacillota</taxon>
        <taxon>Clostridia</taxon>
        <taxon>Eubacteriales</taxon>
        <taxon>Clostridiaceae</taxon>
        <taxon>Clostridium</taxon>
    </lineage>
</organism>
<feature type="chain" id="PRO_0000365875" description="ATP synthase subunit c">
    <location>
        <begin position="1"/>
        <end position="72"/>
    </location>
</feature>
<feature type="transmembrane region" description="Helical" evidence="1">
    <location>
        <begin position="5"/>
        <end position="25"/>
    </location>
</feature>
<feature type="transmembrane region" description="Helical" evidence="1">
    <location>
        <begin position="52"/>
        <end position="72"/>
    </location>
</feature>
<feature type="site" description="Reversibly protonated during proton transport" evidence="1">
    <location>
        <position position="55"/>
    </location>
</feature>
<sequence>MDMKLLAAGIAVLAGIGAGIGIGIATAGAIEATARQPEASDKIQSLFIMGAGLSEATAIYGLVISIILLFVV</sequence>
<reference key="1">
    <citation type="journal article" date="2006" name="Genome Res.">
        <title>Skewed genomic variability in strains of the toxigenic bacterial pathogen, Clostridium perfringens.</title>
        <authorList>
            <person name="Myers G.S.A."/>
            <person name="Rasko D.A."/>
            <person name="Cheung J.K."/>
            <person name="Ravel J."/>
            <person name="Seshadri R."/>
            <person name="DeBoy R.T."/>
            <person name="Ren Q."/>
            <person name="Varga J."/>
            <person name="Awad M.M."/>
            <person name="Brinkac L.M."/>
            <person name="Daugherty S.C."/>
            <person name="Haft D.H."/>
            <person name="Dodson R.J."/>
            <person name="Madupu R."/>
            <person name="Nelson W.C."/>
            <person name="Rosovitz M.J."/>
            <person name="Sullivan S.A."/>
            <person name="Khouri H."/>
            <person name="Dimitrov G.I."/>
            <person name="Watkins K.L."/>
            <person name="Mulligan S."/>
            <person name="Benton J."/>
            <person name="Radune D."/>
            <person name="Fisher D.J."/>
            <person name="Atkins H.S."/>
            <person name="Hiscox T."/>
            <person name="Jost B.H."/>
            <person name="Billington S.J."/>
            <person name="Songer J.G."/>
            <person name="McClane B.A."/>
            <person name="Titball R.W."/>
            <person name="Rood J.I."/>
            <person name="Melville S.B."/>
            <person name="Paulsen I.T."/>
        </authorList>
    </citation>
    <scope>NUCLEOTIDE SEQUENCE [LARGE SCALE GENOMIC DNA]</scope>
    <source>
        <strain>SM101 / Type A</strain>
    </source>
</reference>
<proteinExistence type="inferred from homology"/>
<dbReference type="EMBL" id="CP000312">
    <property type="protein sequence ID" value="ABG86125.1"/>
    <property type="molecule type" value="Genomic_DNA"/>
</dbReference>
<dbReference type="RefSeq" id="WP_011592986.1">
    <property type="nucleotide sequence ID" value="NC_008262.1"/>
</dbReference>
<dbReference type="SMR" id="Q0SQZ0"/>
<dbReference type="KEGG" id="cpr:CPR_2167"/>
<dbReference type="Proteomes" id="UP000001824">
    <property type="component" value="Chromosome"/>
</dbReference>
<dbReference type="GO" id="GO:0005886">
    <property type="term" value="C:plasma membrane"/>
    <property type="evidence" value="ECO:0007669"/>
    <property type="project" value="UniProtKB-SubCell"/>
</dbReference>
<dbReference type="GO" id="GO:0045259">
    <property type="term" value="C:proton-transporting ATP synthase complex"/>
    <property type="evidence" value="ECO:0007669"/>
    <property type="project" value="UniProtKB-KW"/>
</dbReference>
<dbReference type="GO" id="GO:0033177">
    <property type="term" value="C:proton-transporting two-sector ATPase complex, proton-transporting domain"/>
    <property type="evidence" value="ECO:0007669"/>
    <property type="project" value="InterPro"/>
</dbReference>
<dbReference type="GO" id="GO:0008289">
    <property type="term" value="F:lipid binding"/>
    <property type="evidence" value="ECO:0007669"/>
    <property type="project" value="UniProtKB-KW"/>
</dbReference>
<dbReference type="GO" id="GO:0046933">
    <property type="term" value="F:proton-transporting ATP synthase activity, rotational mechanism"/>
    <property type="evidence" value="ECO:0007669"/>
    <property type="project" value="UniProtKB-UniRule"/>
</dbReference>
<dbReference type="FunFam" id="1.20.20.10:FF:000002">
    <property type="entry name" value="ATP synthase subunit c"/>
    <property type="match status" value="1"/>
</dbReference>
<dbReference type="Gene3D" id="1.20.20.10">
    <property type="entry name" value="F1F0 ATP synthase subunit C"/>
    <property type="match status" value="1"/>
</dbReference>
<dbReference type="HAMAP" id="MF_01396">
    <property type="entry name" value="ATP_synth_c_bact"/>
    <property type="match status" value="1"/>
</dbReference>
<dbReference type="InterPro" id="IPR005953">
    <property type="entry name" value="ATP_synth_csu_bac/chlpt"/>
</dbReference>
<dbReference type="InterPro" id="IPR000454">
    <property type="entry name" value="ATP_synth_F0_csu"/>
</dbReference>
<dbReference type="InterPro" id="IPR020537">
    <property type="entry name" value="ATP_synth_F0_csu_DDCD_BS"/>
</dbReference>
<dbReference type="InterPro" id="IPR038662">
    <property type="entry name" value="ATP_synth_F0_csu_sf"/>
</dbReference>
<dbReference type="InterPro" id="IPR002379">
    <property type="entry name" value="ATPase_proteolipid_c-like_dom"/>
</dbReference>
<dbReference type="InterPro" id="IPR035921">
    <property type="entry name" value="F/V-ATP_Csub_sf"/>
</dbReference>
<dbReference type="NCBIfam" id="TIGR01260">
    <property type="entry name" value="ATP_synt_c"/>
    <property type="match status" value="1"/>
</dbReference>
<dbReference type="PANTHER" id="PTHR10031">
    <property type="entry name" value="ATP SYNTHASE LIPID-BINDING PROTEIN, MITOCHONDRIAL"/>
    <property type="match status" value="1"/>
</dbReference>
<dbReference type="PANTHER" id="PTHR10031:SF0">
    <property type="entry name" value="ATPASE PROTEIN 9"/>
    <property type="match status" value="1"/>
</dbReference>
<dbReference type="Pfam" id="PF00137">
    <property type="entry name" value="ATP-synt_C"/>
    <property type="match status" value="1"/>
</dbReference>
<dbReference type="PRINTS" id="PR00124">
    <property type="entry name" value="ATPASEC"/>
</dbReference>
<dbReference type="SUPFAM" id="SSF81333">
    <property type="entry name" value="F1F0 ATP synthase subunit C"/>
    <property type="match status" value="1"/>
</dbReference>
<dbReference type="PROSITE" id="PS00605">
    <property type="entry name" value="ATPASE_C"/>
    <property type="match status" value="1"/>
</dbReference>
<protein>
    <recommendedName>
        <fullName evidence="1">ATP synthase subunit c</fullName>
    </recommendedName>
    <alternativeName>
        <fullName evidence="1">ATP synthase F(0) sector subunit c</fullName>
    </alternativeName>
    <alternativeName>
        <fullName evidence="1">F-type ATPase subunit c</fullName>
        <shortName evidence="1">F-ATPase subunit c</shortName>
    </alternativeName>
    <alternativeName>
        <fullName evidence="1">Lipid-binding protein</fullName>
    </alternativeName>
</protein>
<name>ATPL_CLOPS</name>
<evidence type="ECO:0000255" key="1">
    <source>
        <dbReference type="HAMAP-Rule" id="MF_01396"/>
    </source>
</evidence>